<proteinExistence type="inferred from homology"/>
<dbReference type="EMBL" id="AP008231">
    <property type="protein sequence ID" value="BAD79149.1"/>
    <property type="molecule type" value="Genomic_DNA"/>
</dbReference>
<dbReference type="RefSeq" id="WP_011243271.1">
    <property type="nucleotide sequence ID" value="NZ_CP085785.1"/>
</dbReference>
<dbReference type="SMR" id="Q5N3H1"/>
<dbReference type="GeneID" id="72429388"/>
<dbReference type="KEGG" id="syc:syc0959_d"/>
<dbReference type="eggNOG" id="COG0556">
    <property type="taxonomic scope" value="Bacteria"/>
</dbReference>
<dbReference type="Proteomes" id="UP000001175">
    <property type="component" value="Chromosome"/>
</dbReference>
<dbReference type="GO" id="GO:0005737">
    <property type="term" value="C:cytoplasm"/>
    <property type="evidence" value="ECO:0007669"/>
    <property type="project" value="UniProtKB-SubCell"/>
</dbReference>
<dbReference type="GO" id="GO:0009380">
    <property type="term" value="C:excinuclease repair complex"/>
    <property type="evidence" value="ECO:0007669"/>
    <property type="project" value="InterPro"/>
</dbReference>
<dbReference type="GO" id="GO:0005524">
    <property type="term" value="F:ATP binding"/>
    <property type="evidence" value="ECO:0007669"/>
    <property type="project" value="UniProtKB-UniRule"/>
</dbReference>
<dbReference type="GO" id="GO:0016887">
    <property type="term" value="F:ATP hydrolysis activity"/>
    <property type="evidence" value="ECO:0007669"/>
    <property type="project" value="InterPro"/>
</dbReference>
<dbReference type="GO" id="GO:0003677">
    <property type="term" value="F:DNA binding"/>
    <property type="evidence" value="ECO:0007669"/>
    <property type="project" value="UniProtKB-UniRule"/>
</dbReference>
<dbReference type="GO" id="GO:0009381">
    <property type="term" value="F:excinuclease ABC activity"/>
    <property type="evidence" value="ECO:0007669"/>
    <property type="project" value="UniProtKB-UniRule"/>
</dbReference>
<dbReference type="GO" id="GO:0006289">
    <property type="term" value="P:nucleotide-excision repair"/>
    <property type="evidence" value="ECO:0007669"/>
    <property type="project" value="UniProtKB-UniRule"/>
</dbReference>
<dbReference type="GO" id="GO:0009432">
    <property type="term" value="P:SOS response"/>
    <property type="evidence" value="ECO:0007669"/>
    <property type="project" value="UniProtKB-UniRule"/>
</dbReference>
<dbReference type="CDD" id="cd17916">
    <property type="entry name" value="DEXHc_UvrB"/>
    <property type="match status" value="1"/>
</dbReference>
<dbReference type="CDD" id="cd18790">
    <property type="entry name" value="SF2_C_UvrB"/>
    <property type="match status" value="1"/>
</dbReference>
<dbReference type="Gene3D" id="3.40.50.300">
    <property type="entry name" value="P-loop containing nucleotide triphosphate hydrolases"/>
    <property type="match status" value="3"/>
</dbReference>
<dbReference type="Gene3D" id="4.10.860.10">
    <property type="entry name" value="UVR domain"/>
    <property type="match status" value="1"/>
</dbReference>
<dbReference type="HAMAP" id="MF_00204">
    <property type="entry name" value="UvrB"/>
    <property type="match status" value="1"/>
</dbReference>
<dbReference type="InterPro" id="IPR006935">
    <property type="entry name" value="Helicase/UvrB_N"/>
</dbReference>
<dbReference type="InterPro" id="IPR014001">
    <property type="entry name" value="Helicase_ATP-bd"/>
</dbReference>
<dbReference type="InterPro" id="IPR001650">
    <property type="entry name" value="Helicase_C-like"/>
</dbReference>
<dbReference type="InterPro" id="IPR027417">
    <property type="entry name" value="P-loop_NTPase"/>
</dbReference>
<dbReference type="InterPro" id="IPR001943">
    <property type="entry name" value="UVR_dom"/>
</dbReference>
<dbReference type="InterPro" id="IPR036876">
    <property type="entry name" value="UVR_dom_sf"/>
</dbReference>
<dbReference type="InterPro" id="IPR004807">
    <property type="entry name" value="UvrB"/>
</dbReference>
<dbReference type="InterPro" id="IPR041471">
    <property type="entry name" value="UvrB_inter"/>
</dbReference>
<dbReference type="InterPro" id="IPR024759">
    <property type="entry name" value="UvrB_YAD/RRR_dom"/>
</dbReference>
<dbReference type="NCBIfam" id="NF003673">
    <property type="entry name" value="PRK05298.1"/>
    <property type="match status" value="1"/>
</dbReference>
<dbReference type="NCBIfam" id="TIGR00631">
    <property type="entry name" value="uvrb"/>
    <property type="match status" value="1"/>
</dbReference>
<dbReference type="PANTHER" id="PTHR24029">
    <property type="entry name" value="UVRABC SYSTEM PROTEIN B"/>
    <property type="match status" value="1"/>
</dbReference>
<dbReference type="PANTHER" id="PTHR24029:SF0">
    <property type="entry name" value="UVRABC SYSTEM PROTEIN B"/>
    <property type="match status" value="1"/>
</dbReference>
<dbReference type="Pfam" id="PF00271">
    <property type="entry name" value="Helicase_C"/>
    <property type="match status" value="1"/>
</dbReference>
<dbReference type="Pfam" id="PF04851">
    <property type="entry name" value="ResIII"/>
    <property type="match status" value="1"/>
</dbReference>
<dbReference type="Pfam" id="PF02151">
    <property type="entry name" value="UVR"/>
    <property type="match status" value="1"/>
</dbReference>
<dbReference type="Pfam" id="PF12344">
    <property type="entry name" value="UvrB"/>
    <property type="match status" value="1"/>
</dbReference>
<dbReference type="Pfam" id="PF17757">
    <property type="entry name" value="UvrB_inter"/>
    <property type="match status" value="1"/>
</dbReference>
<dbReference type="SMART" id="SM00487">
    <property type="entry name" value="DEXDc"/>
    <property type="match status" value="1"/>
</dbReference>
<dbReference type="SMART" id="SM00490">
    <property type="entry name" value="HELICc"/>
    <property type="match status" value="1"/>
</dbReference>
<dbReference type="SUPFAM" id="SSF46600">
    <property type="entry name" value="C-terminal UvrC-binding domain of UvrB"/>
    <property type="match status" value="1"/>
</dbReference>
<dbReference type="SUPFAM" id="SSF52540">
    <property type="entry name" value="P-loop containing nucleoside triphosphate hydrolases"/>
    <property type="match status" value="2"/>
</dbReference>
<dbReference type="PROSITE" id="PS51192">
    <property type="entry name" value="HELICASE_ATP_BIND_1"/>
    <property type="match status" value="1"/>
</dbReference>
<dbReference type="PROSITE" id="PS51194">
    <property type="entry name" value="HELICASE_CTER"/>
    <property type="match status" value="1"/>
</dbReference>
<dbReference type="PROSITE" id="PS50151">
    <property type="entry name" value="UVR"/>
    <property type="match status" value="1"/>
</dbReference>
<feature type="chain" id="PRO_0000227375" description="UvrABC system protein B">
    <location>
        <begin position="1"/>
        <end position="666"/>
    </location>
</feature>
<feature type="domain" description="Helicase ATP-binding" evidence="1">
    <location>
        <begin position="25"/>
        <end position="412"/>
    </location>
</feature>
<feature type="domain" description="Helicase C-terminal" evidence="1">
    <location>
        <begin position="429"/>
        <end position="595"/>
    </location>
</feature>
<feature type="domain" description="UVR" evidence="1">
    <location>
        <begin position="626"/>
        <end position="661"/>
    </location>
</feature>
<feature type="short sequence motif" description="Beta-hairpin">
    <location>
        <begin position="91"/>
        <end position="114"/>
    </location>
</feature>
<feature type="binding site" evidence="1">
    <location>
        <begin position="38"/>
        <end position="45"/>
    </location>
    <ligand>
        <name>ATP</name>
        <dbReference type="ChEBI" id="CHEBI:30616"/>
    </ligand>
</feature>
<protein>
    <recommendedName>
        <fullName evidence="1">UvrABC system protein B</fullName>
        <shortName evidence="1">Protein UvrB</shortName>
    </recommendedName>
    <alternativeName>
        <fullName evidence="1">Excinuclease ABC subunit B</fullName>
    </alternativeName>
</protein>
<name>UVRB_SYNP6</name>
<evidence type="ECO:0000255" key="1">
    <source>
        <dbReference type="HAMAP-Rule" id="MF_00204"/>
    </source>
</evidence>
<gene>
    <name evidence="1" type="primary">uvrB</name>
    <name type="ordered locus">syc0959_d</name>
</gene>
<keyword id="KW-0067">ATP-binding</keyword>
<keyword id="KW-0963">Cytoplasm</keyword>
<keyword id="KW-0227">DNA damage</keyword>
<keyword id="KW-0228">DNA excision</keyword>
<keyword id="KW-0234">DNA repair</keyword>
<keyword id="KW-0267">Excision nuclease</keyword>
<keyword id="KW-0547">Nucleotide-binding</keyword>
<keyword id="KW-0742">SOS response</keyword>
<accession>Q5N3H1</accession>
<comment type="function">
    <text evidence="1">The UvrABC repair system catalyzes the recognition and processing of DNA lesions. A damage recognition complex composed of 2 UvrA and 2 UvrB subunits scans DNA for abnormalities. Upon binding of the UvrA(2)B(2) complex to a putative damaged site, the DNA wraps around one UvrB monomer. DNA wrap is dependent on ATP binding by UvrB and probably causes local melting of the DNA helix, facilitating insertion of UvrB beta-hairpin between the DNA strands. Then UvrB probes one DNA strand for the presence of a lesion. If a lesion is found the UvrA subunits dissociate and the UvrB-DNA preincision complex is formed. This complex is subsequently bound by UvrC and the second UvrB is released. If no lesion is found, the DNA wraps around the other UvrB subunit that will check the other stand for damage.</text>
</comment>
<comment type="subunit">
    <text evidence="1">Forms a heterotetramer with UvrA during the search for lesions. Interacts with UvrC in an incision complex.</text>
</comment>
<comment type="subcellular location">
    <subcellularLocation>
        <location evidence="1">Cytoplasm</location>
    </subcellularLocation>
</comment>
<comment type="domain">
    <text evidence="1">The beta-hairpin motif is involved in DNA binding.</text>
</comment>
<comment type="similarity">
    <text evidence="1">Belongs to the UvrB family.</text>
</comment>
<sequence length="666" mass="76251">MTPFQLQARYQPMGDQPTAIAQLVEQVQAGAPYQTLLGATGTGKTFTIANVIAQVGRPALVLAHNKTLAAQLCNELREFFPNNAVEYFISYYDYYQPEAYIPVTDTYIAKTASINEEIDMLRHSATRNLFERRDVIVVASISCIYGLGIPSEYLKAAIPLEVGAEINMREVLRQLVDVQYSRNDLESGRGRFRVKGDVLEIGPAYEDRIIRVEFFGDEIDAIRYIDPVTGEILQSLDRLNIYPARHFVTPEERLEIAIAEIKEELNQQLLTLQAEGKLVEAQRLEQRTRYDLEMLQEVGYCNGVENYARHLAGREPGSPPECLIDYFPKDWLLVVDESHVTVPQLRGMYNGDQSRKKVLVDHGFRLPSAADNRPLKSEEFWEKVRQCIFVSATPGDWEIERSEEQIVEQVIRPTGVVDPEVFVRPTEGQVDDLLAEIQQRVRRQERALITTLTKRMAEDLTDYLSDRGVKVRYLHSEINSIERIEILQDLRNGDFDVLIGVNLLREGLDLPEVSLVAILDADKEGFLRTERSLIQTIGRAARHINGQAILYADRMTESMEKAISETERRRRIQLDYNQRHNITPQPIIKRSSNAILSFLEVSRRLNKQELEVAVSQADDLSLEEIPNLITQLEAQMKEAAKNLEFEEAAQYRDRIKKLRERLVGRH</sequence>
<organism>
    <name type="scientific">Synechococcus sp. (strain ATCC 27144 / PCC 6301 / SAUG 1402/1)</name>
    <name type="common">Anacystis nidulans</name>
    <dbReference type="NCBI Taxonomy" id="269084"/>
    <lineage>
        <taxon>Bacteria</taxon>
        <taxon>Bacillati</taxon>
        <taxon>Cyanobacteriota</taxon>
        <taxon>Cyanophyceae</taxon>
        <taxon>Synechococcales</taxon>
        <taxon>Synechococcaceae</taxon>
        <taxon>Synechococcus</taxon>
    </lineage>
</organism>
<reference key="1">
    <citation type="journal article" date="2007" name="Photosyn. Res.">
        <title>Complete nucleotide sequence of the freshwater unicellular cyanobacterium Synechococcus elongatus PCC 6301 chromosome: gene content and organization.</title>
        <authorList>
            <person name="Sugita C."/>
            <person name="Ogata K."/>
            <person name="Shikata M."/>
            <person name="Jikuya H."/>
            <person name="Takano J."/>
            <person name="Furumichi M."/>
            <person name="Kanehisa M."/>
            <person name="Omata T."/>
            <person name="Sugiura M."/>
            <person name="Sugita M."/>
        </authorList>
    </citation>
    <scope>NUCLEOTIDE SEQUENCE [LARGE SCALE GENOMIC DNA]</scope>
    <source>
        <strain>ATCC 27144 / PCC 6301 / SAUG 1402/1</strain>
    </source>
</reference>